<keyword id="KW-0007">Acetylation</keyword>
<keyword id="KW-0024">Alternative initiation</keyword>
<keyword id="KW-0158">Chromosome</keyword>
<keyword id="KW-0963">Cytoplasm</keyword>
<keyword id="KW-0227">DNA damage</keyword>
<keyword id="KW-0234">DNA repair</keyword>
<keyword id="KW-0456">Lyase</keyword>
<keyword id="KW-0496">Mitochondrion</keyword>
<keyword id="KW-0539">Nucleus</keyword>
<keyword id="KW-0597">Phosphoprotein</keyword>
<keyword id="KW-1185">Reference proteome</keyword>
<keyword id="KW-0809">Transit peptide</keyword>
<keyword id="KW-0816">Tricarboxylic acid cycle</keyword>
<dbReference type="EC" id="4.2.1.2" evidence="2"/>
<dbReference type="EMBL" id="AB125168">
    <property type="protein sequence ID" value="BAD51956.1"/>
    <property type="molecule type" value="mRNA"/>
</dbReference>
<dbReference type="SMR" id="Q60HF9"/>
<dbReference type="STRING" id="9541.ENSMFAP00000028430"/>
<dbReference type="eggNOG" id="KOG1317">
    <property type="taxonomic scope" value="Eukaryota"/>
</dbReference>
<dbReference type="UniPathway" id="UPA00223">
    <property type="reaction ID" value="UER01007"/>
</dbReference>
<dbReference type="Proteomes" id="UP000233100">
    <property type="component" value="Unplaced"/>
</dbReference>
<dbReference type="GO" id="GO:0005694">
    <property type="term" value="C:chromosome"/>
    <property type="evidence" value="ECO:0007669"/>
    <property type="project" value="UniProtKB-SubCell"/>
</dbReference>
<dbReference type="GO" id="GO:0005829">
    <property type="term" value="C:cytosol"/>
    <property type="evidence" value="ECO:0007669"/>
    <property type="project" value="UniProtKB-SubCell"/>
</dbReference>
<dbReference type="GO" id="GO:0005739">
    <property type="term" value="C:mitochondrion"/>
    <property type="evidence" value="ECO:0007669"/>
    <property type="project" value="UniProtKB-SubCell"/>
</dbReference>
<dbReference type="GO" id="GO:0005634">
    <property type="term" value="C:nucleus"/>
    <property type="evidence" value="ECO:0007669"/>
    <property type="project" value="UniProtKB-SubCell"/>
</dbReference>
<dbReference type="GO" id="GO:0004333">
    <property type="term" value="F:fumarate hydratase activity"/>
    <property type="evidence" value="ECO:0000250"/>
    <property type="project" value="UniProtKB"/>
</dbReference>
<dbReference type="GO" id="GO:0006974">
    <property type="term" value="P:DNA damage response"/>
    <property type="evidence" value="ECO:0000250"/>
    <property type="project" value="UniProtKB"/>
</dbReference>
<dbReference type="GO" id="GO:0006281">
    <property type="term" value="P:DNA repair"/>
    <property type="evidence" value="ECO:0007669"/>
    <property type="project" value="UniProtKB-KW"/>
</dbReference>
<dbReference type="GO" id="GO:0006106">
    <property type="term" value="P:fumarate metabolic process"/>
    <property type="evidence" value="ECO:0000250"/>
    <property type="project" value="UniProtKB"/>
</dbReference>
<dbReference type="GO" id="GO:0006108">
    <property type="term" value="P:malate metabolic process"/>
    <property type="evidence" value="ECO:0000250"/>
    <property type="project" value="UniProtKB"/>
</dbReference>
<dbReference type="GO" id="GO:2001034">
    <property type="term" value="P:positive regulation of double-strand break repair via nonhomologous end joining"/>
    <property type="evidence" value="ECO:0000250"/>
    <property type="project" value="UniProtKB"/>
</dbReference>
<dbReference type="GO" id="GO:0000821">
    <property type="term" value="P:regulation of arginine metabolic process"/>
    <property type="evidence" value="ECO:0000250"/>
    <property type="project" value="UniProtKB"/>
</dbReference>
<dbReference type="GO" id="GO:0006099">
    <property type="term" value="P:tricarboxylic acid cycle"/>
    <property type="evidence" value="ECO:0007669"/>
    <property type="project" value="UniProtKB-UniPathway"/>
</dbReference>
<dbReference type="GO" id="GO:0000050">
    <property type="term" value="P:urea cycle"/>
    <property type="evidence" value="ECO:0000250"/>
    <property type="project" value="UniProtKB"/>
</dbReference>
<dbReference type="CDD" id="cd01362">
    <property type="entry name" value="Fumarase_classII"/>
    <property type="match status" value="1"/>
</dbReference>
<dbReference type="FunFam" id="1.10.40.30:FF:000002">
    <property type="entry name" value="Fumarate hydratase class II"/>
    <property type="match status" value="1"/>
</dbReference>
<dbReference type="FunFam" id="1.10.275.10:FF:000001">
    <property type="entry name" value="Fumarate hydratase, mitochondrial"/>
    <property type="match status" value="1"/>
</dbReference>
<dbReference type="FunFam" id="1.20.200.10:FF:000001">
    <property type="entry name" value="Fumarate hydratase, mitochondrial"/>
    <property type="match status" value="1"/>
</dbReference>
<dbReference type="Gene3D" id="1.10.40.30">
    <property type="entry name" value="Fumarase/aspartase (C-terminal domain)"/>
    <property type="match status" value="1"/>
</dbReference>
<dbReference type="Gene3D" id="1.20.200.10">
    <property type="entry name" value="Fumarase/aspartase (Central domain)"/>
    <property type="match status" value="1"/>
</dbReference>
<dbReference type="Gene3D" id="1.10.275.10">
    <property type="entry name" value="Fumarase/aspartase (N-terminal domain)"/>
    <property type="match status" value="1"/>
</dbReference>
<dbReference type="HAMAP" id="MF_00743">
    <property type="entry name" value="FumaraseC"/>
    <property type="match status" value="1"/>
</dbReference>
<dbReference type="InterPro" id="IPR005677">
    <property type="entry name" value="Fum_hydII"/>
</dbReference>
<dbReference type="InterPro" id="IPR024083">
    <property type="entry name" value="Fumarase/histidase_N"/>
</dbReference>
<dbReference type="InterPro" id="IPR018951">
    <property type="entry name" value="Fumarase_C_C"/>
</dbReference>
<dbReference type="InterPro" id="IPR020557">
    <property type="entry name" value="Fumarate_lyase_CS"/>
</dbReference>
<dbReference type="InterPro" id="IPR000362">
    <property type="entry name" value="Fumarate_lyase_fam"/>
</dbReference>
<dbReference type="InterPro" id="IPR022761">
    <property type="entry name" value="Fumarate_lyase_N"/>
</dbReference>
<dbReference type="InterPro" id="IPR008948">
    <property type="entry name" value="L-Aspartase-like"/>
</dbReference>
<dbReference type="NCBIfam" id="TIGR00979">
    <property type="entry name" value="fumC_II"/>
    <property type="match status" value="1"/>
</dbReference>
<dbReference type="NCBIfam" id="NF008909">
    <property type="entry name" value="PRK12273.1"/>
    <property type="match status" value="1"/>
</dbReference>
<dbReference type="PANTHER" id="PTHR11444">
    <property type="entry name" value="ASPARTATEAMMONIA/ARGININOSUCCINATE/ADENYLOSUCCINATE LYASE"/>
    <property type="match status" value="1"/>
</dbReference>
<dbReference type="PANTHER" id="PTHR11444:SF1">
    <property type="entry name" value="FUMARATE HYDRATASE, MITOCHONDRIAL"/>
    <property type="match status" value="1"/>
</dbReference>
<dbReference type="Pfam" id="PF10415">
    <property type="entry name" value="FumaraseC_C"/>
    <property type="match status" value="1"/>
</dbReference>
<dbReference type="Pfam" id="PF00206">
    <property type="entry name" value="Lyase_1"/>
    <property type="match status" value="1"/>
</dbReference>
<dbReference type="PRINTS" id="PR00149">
    <property type="entry name" value="FUMRATELYASE"/>
</dbReference>
<dbReference type="SUPFAM" id="SSF48557">
    <property type="entry name" value="L-aspartase-like"/>
    <property type="match status" value="1"/>
</dbReference>
<dbReference type="PROSITE" id="PS00163">
    <property type="entry name" value="FUMARATE_LYASES"/>
    <property type="match status" value="1"/>
</dbReference>
<evidence type="ECO:0000250" key="1">
    <source>
        <dbReference type="UniProtKB" id="P05042"/>
    </source>
</evidence>
<evidence type="ECO:0000250" key="2">
    <source>
        <dbReference type="UniProtKB" id="P07954"/>
    </source>
</evidence>
<evidence type="ECO:0000250" key="3">
    <source>
        <dbReference type="UniProtKB" id="P10173"/>
    </source>
</evidence>
<evidence type="ECO:0000250" key="4">
    <source>
        <dbReference type="UniProtKB" id="P97807"/>
    </source>
</evidence>
<evidence type="ECO:0000250" key="5">
    <source>
        <dbReference type="UniProtKB" id="P9WN93"/>
    </source>
</evidence>
<evidence type="ECO:0000303" key="6">
    <source ref="1"/>
</evidence>
<evidence type="ECO:0000305" key="7"/>
<comment type="function">
    <text evidence="2 7">Catalyzes the reversible stereospecific interconversion of fumarate to L-malate (By similarity). Experiments in other species have demonstrated that specific isoforms of this protein act in defined pathways and favor one direction over the other (Probable).</text>
</comment>
<comment type="function">
    <molecule>Isoform Mitochondrial</molecule>
    <text evidence="3">Catalyzes the hydration of fumarate to L-malate in the tricarboxylic acid (TCA) cycle to facilitate a transition step in the production of energy in the form of NADH.</text>
</comment>
<comment type="function">
    <molecule>Isoform Cytoplasmic</molecule>
    <text evidence="2 4">Catalyzes the dehydration of L-malate to fumarate. Fumarate metabolism in the cytosol plays a role during urea cycle and arginine metabolism; fumarate being a by-product of the urea cycle and amino-acid catabolism (By similarity). Also plays a role in DNA repair by promoting non-homologous end-joining (NHEJ). In response to DNA damage and phosphorylation by PRKDC, translocates to the nucleus and accumulates at DNA double-strand breaks (DSBs): acts by catalyzing formation of fumarate, an inhibitor of KDM2B histone demethylase activity, resulting in enhanced dimethylation of histone H3 'Lys-36' (H3K36me2) (By similarity).</text>
</comment>
<comment type="catalytic activity">
    <molecule>Isoform Mitochondrial</molecule>
    <reaction evidence="3">
        <text>(S)-malate = fumarate + H2O</text>
        <dbReference type="Rhea" id="RHEA:12460"/>
        <dbReference type="ChEBI" id="CHEBI:15377"/>
        <dbReference type="ChEBI" id="CHEBI:15589"/>
        <dbReference type="ChEBI" id="CHEBI:29806"/>
        <dbReference type="EC" id="4.2.1.2"/>
    </reaction>
    <physiologicalReaction direction="right-to-left" evidence="3">
        <dbReference type="Rhea" id="RHEA:12462"/>
    </physiologicalReaction>
</comment>
<comment type="catalytic activity">
    <molecule>Isoform Cytoplasmic</molecule>
    <reaction evidence="4">
        <text>(S)-malate = fumarate + H2O</text>
        <dbReference type="Rhea" id="RHEA:12460"/>
        <dbReference type="ChEBI" id="CHEBI:15377"/>
        <dbReference type="ChEBI" id="CHEBI:15589"/>
        <dbReference type="ChEBI" id="CHEBI:29806"/>
        <dbReference type="EC" id="4.2.1.2"/>
    </reaction>
    <physiologicalReaction direction="left-to-right" evidence="4">
        <dbReference type="Rhea" id="RHEA:12461"/>
    </physiologicalReaction>
</comment>
<comment type="pathway">
    <text evidence="3">Carbohydrate metabolism; tricarboxylic acid cycle; (S)-malate from fumarate: step 1/1.</text>
</comment>
<comment type="subunit">
    <text evidence="2">Homotetramer. Interacts with H2AZ1.</text>
</comment>
<comment type="subcellular location">
    <molecule>Isoform Mitochondrial</molecule>
    <subcellularLocation>
        <location evidence="2">Mitochondrion</location>
    </subcellularLocation>
</comment>
<comment type="subcellular location">
    <molecule>Isoform Cytoplasmic</molecule>
    <subcellularLocation>
        <location evidence="2">Cytoplasm</location>
        <location evidence="2">Cytosol</location>
    </subcellularLocation>
    <subcellularLocation>
        <location evidence="2">Nucleus</location>
    </subcellularLocation>
    <subcellularLocation>
        <location evidence="2">Chromosome</location>
    </subcellularLocation>
    <text evidence="2">Translocates to the nucleus in response to DNA damage: localizes to DNA double-strand breaks (DSBs) following phosphorylation by PRKDC.</text>
</comment>
<comment type="alternative products">
    <event type="alternative initiation"/>
    <isoform>
        <id>Q60HF9-1</id>
        <name evidence="2">Mitochondrial</name>
        <sequence type="displayed"/>
    </isoform>
    <isoform>
        <id>Q60HF9-2</id>
        <name evidence="2">Cytoplasmic</name>
        <sequence type="described" ref="VSP_018966"/>
    </isoform>
</comment>
<comment type="PTM">
    <molecule>Isoform Cytoplasmic</molecule>
    <text evidence="2">Phosphorylation at Thr-236 by PRKDC in response to DNA damage promotes translocation to the nucleus and recruitment to DNA double-strand breaks (DSBs).</text>
</comment>
<comment type="miscellaneous">
    <text evidence="1 5">There are 2 substrate-binding sites: the catalytic A site, and the non-catalytic B site that may play a role in the transfer of substrate or product between the active site and the solvent. Alternatively, the B site may bind allosteric effectors.</text>
</comment>
<comment type="similarity">
    <text evidence="7">Belongs to the class-II fumarase/aspartase family. Fumarase subfamily.</text>
</comment>
<reference key="1">
    <citation type="submission" date="2003-10" db="EMBL/GenBank/DDBJ databases">
        <title>Isolation and characterization of cDNA for macaque neurological disease genes.</title>
        <authorList>
            <person name="Kusuda J."/>
            <person name="Osada N."/>
            <person name="Tanuma R."/>
            <person name="Hirata M."/>
            <person name="Sugano S."/>
            <person name="Hashimoto K."/>
        </authorList>
    </citation>
    <scope>NUCLEOTIDE SEQUENCE [LARGE SCALE MRNA]</scope>
    <source>
        <tissue>Occipital cortex</tissue>
    </source>
</reference>
<accession>Q60HF9</accession>
<sequence>MYRALWLLARSRRLVRPPASALASAPGLSGAAVPSFWPPNAARMASQNSFRIEYDTFGELKVPNDKYYGAQTVRSTMNFKIGGVTERMPTPVIKAFGILKRAAAEVNQDYGLDPKIANAIMKAADEVAEGKLNDHFPLVVWQTGSGTQTNMNVNEVISNRAIEMLGGELGSKIPVHPNDHVNKSQSSNDTFPTAMHIAAAIEVHEVLLPGLQKLHDALDAKSKEFAQIIKIGRTHTQDAVPLTLGQEFSGYVQQVKYAVTRIKAAMPRIYELAAGGTAVGTGLNTRIGFAEKVAAKVAALTGLPFVTAPNKFEALAAHDALVELSGAMNTTACSLMKIANDIRFLGSGPRSGLGELILPENEPGSSIMPGKVNPTQCEAMTMVAAQVMGNHVAVTVGGSNGHFELNVFKPMMIKNVLHSARLLGDASVSFTENCVVGIQANTERINKLMNESLMLVTALNPHIGYDKAAKIAKTAHKNGSTLKETAIELGYLTAEQFDEWVKPKDMLGPK</sequence>
<protein>
    <recommendedName>
        <fullName evidence="2">Fumarate hydratase, mitochondrial</fullName>
        <shortName evidence="2">Fumarase</shortName>
        <ecNumber evidence="2">4.2.1.2</ecNumber>
    </recommendedName>
</protein>
<organism>
    <name type="scientific">Macaca fascicularis</name>
    <name type="common">Crab-eating macaque</name>
    <name type="synonym">Cynomolgus monkey</name>
    <dbReference type="NCBI Taxonomy" id="9541"/>
    <lineage>
        <taxon>Eukaryota</taxon>
        <taxon>Metazoa</taxon>
        <taxon>Chordata</taxon>
        <taxon>Craniata</taxon>
        <taxon>Vertebrata</taxon>
        <taxon>Euteleostomi</taxon>
        <taxon>Mammalia</taxon>
        <taxon>Eutheria</taxon>
        <taxon>Euarchontoglires</taxon>
        <taxon>Primates</taxon>
        <taxon>Haplorrhini</taxon>
        <taxon>Catarrhini</taxon>
        <taxon>Cercopithecidae</taxon>
        <taxon>Cercopithecinae</taxon>
        <taxon>Macaca</taxon>
    </lineage>
</organism>
<name>FUMH_MACFA</name>
<proteinExistence type="evidence at transcript level"/>
<gene>
    <name evidence="2" type="primary">FH</name>
    <name evidence="6" type="ORF">QorA-13820</name>
</gene>
<feature type="transit peptide" description="Mitochondrion" evidence="3">
    <location>
        <begin position="1"/>
        <end position="44"/>
    </location>
</feature>
<feature type="chain" id="PRO_0000010321" description="Fumarate hydratase, mitochondrial">
    <location>
        <begin position="45"/>
        <end position="510"/>
    </location>
</feature>
<feature type="active site" description="Proton donor/acceptor" evidence="1">
    <location>
        <position position="235"/>
    </location>
</feature>
<feature type="active site" evidence="5">
    <location>
        <position position="365"/>
    </location>
</feature>
<feature type="binding site" evidence="1">
    <location>
        <begin position="145"/>
        <end position="147"/>
    </location>
    <ligand>
        <name>substrate</name>
    </ligand>
</feature>
<feature type="binding site" description="in site B" evidence="1">
    <location>
        <begin position="176"/>
        <end position="179"/>
    </location>
    <ligand>
        <name>substrate</name>
    </ligand>
</feature>
<feature type="binding site" evidence="1">
    <location>
        <begin position="186"/>
        <end position="188"/>
    </location>
    <ligand>
        <name>substrate</name>
    </ligand>
</feature>
<feature type="binding site" evidence="5">
    <location>
        <position position="234"/>
    </location>
    <ligand>
        <name>substrate</name>
    </ligand>
</feature>
<feature type="binding site" evidence="5">
    <location>
        <position position="366"/>
    </location>
    <ligand>
        <name>substrate</name>
    </ligand>
</feature>
<feature type="binding site" evidence="5">
    <location>
        <begin position="371"/>
        <end position="373"/>
    </location>
    <ligand>
        <name>substrate</name>
    </ligand>
</feature>
<feature type="site" description="Important for catalytic activity" evidence="1">
    <location>
        <position position="378"/>
    </location>
</feature>
<feature type="modified residue" description="N6-acetyllysine; alternate" evidence="4">
    <location>
        <position position="61"/>
    </location>
</feature>
<feature type="modified residue" description="N6-succinyllysine; alternate" evidence="4">
    <location>
        <position position="61"/>
    </location>
</feature>
<feature type="modified residue" description="N6-acetyllysine; alternate" evidence="2">
    <location>
        <position position="66"/>
    </location>
</feature>
<feature type="modified residue" description="N6-succinyllysine; alternate" evidence="4">
    <location>
        <position position="66"/>
    </location>
</feature>
<feature type="modified residue" description="N6-acetyllysine; alternate" evidence="2">
    <location>
        <position position="80"/>
    </location>
</feature>
<feature type="modified residue" description="N6-succinyllysine; alternate" evidence="4">
    <location>
        <position position="80"/>
    </location>
</feature>
<feature type="modified residue" description="Phosphothreonine" evidence="4">
    <location>
        <position position="85"/>
    </location>
</feature>
<feature type="modified residue" description="Phosphothreonine" evidence="2">
    <location>
        <position position="90"/>
    </location>
</feature>
<feature type="modified residue" description="N6-acetyllysine" evidence="2">
    <location>
        <position position="94"/>
    </location>
</feature>
<feature type="modified residue" description="N6-acetyllysine; alternate" evidence="4">
    <location>
        <position position="115"/>
    </location>
</feature>
<feature type="modified residue" description="N6-succinyllysine; alternate" evidence="4">
    <location>
        <position position="115"/>
    </location>
</feature>
<feature type="modified residue" description="N6-acetyllysine; alternate" evidence="4">
    <location>
        <position position="122"/>
    </location>
</feature>
<feature type="modified residue" description="N6-succinyllysine; alternate" evidence="4">
    <location>
        <position position="122"/>
    </location>
</feature>
<feature type="modified residue" description="N6-acetyllysine" evidence="4">
    <location>
        <position position="213"/>
    </location>
</feature>
<feature type="modified residue" description="N6-acetyllysine; alternate" evidence="4">
    <location>
        <position position="223"/>
    </location>
</feature>
<feature type="modified residue" description="N6-succinyllysine; alternate" evidence="4">
    <location>
        <position position="223"/>
    </location>
</feature>
<feature type="modified residue" description="Phosphothreonine" evidence="2">
    <location>
        <position position="236"/>
    </location>
</feature>
<feature type="modified residue" description="N6-acetyllysine" evidence="2">
    <location>
        <position position="256"/>
    </location>
</feature>
<feature type="modified residue" description="N6-acetyllysine; alternate" evidence="2">
    <location>
        <position position="292"/>
    </location>
</feature>
<feature type="modified residue" description="N6-succinyllysine; alternate" evidence="4">
    <location>
        <position position="292"/>
    </location>
</feature>
<feature type="modified residue" description="Phosphoserine" evidence="2">
    <location>
        <position position="366"/>
    </location>
</feature>
<feature type="modified residue" description="N6-succinyllysine" evidence="4">
    <location>
        <position position="467"/>
    </location>
</feature>
<feature type="modified residue" description="N6-succinyllysine" evidence="4">
    <location>
        <position position="473"/>
    </location>
</feature>
<feature type="modified residue" description="N6-acetyllysine" evidence="4">
    <location>
        <position position="502"/>
    </location>
</feature>
<feature type="splice variant" id="VSP_018966" description="In isoform Cytoplasmic." evidence="7">
    <location>
        <begin position="1"/>
        <end position="43"/>
    </location>
</feature>
<feature type="initiator methionine" description="Removed" evidence="2">
    <location sequence="Q60HF9-2">
        <position position="1"/>
    </location>
</feature>